<dbReference type="EC" id="7.1.2.2" evidence="1"/>
<dbReference type="EMBL" id="CP001472">
    <property type="protein sequence ID" value="ACO34402.1"/>
    <property type="molecule type" value="Genomic_DNA"/>
</dbReference>
<dbReference type="RefSeq" id="WP_015896187.1">
    <property type="nucleotide sequence ID" value="NC_012483.1"/>
</dbReference>
<dbReference type="SMR" id="C1F3N6"/>
<dbReference type="FunCoup" id="C1F3N6">
    <property type="interactions" value="405"/>
</dbReference>
<dbReference type="STRING" id="240015.ACP_1028"/>
<dbReference type="KEGG" id="aca:ACP_1028"/>
<dbReference type="eggNOG" id="COG0055">
    <property type="taxonomic scope" value="Bacteria"/>
</dbReference>
<dbReference type="HOGENOM" id="CLU_022398_0_2_0"/>
<dbReference type="InParanoid" id="C1F3N6"/>
<dbReference type="OrthoDB" id="9801639at2"/>
<dbReference type="Proteomes" id="UP000002207">
    <property type="component" value="Chromosome"/>
</dbReference>
<dbReference type="GO" id="GO:0005886">
    <property type="term" value="C:plasma membrane"/>
    <property type="evidence" value="ECO:0007669"/>
    <property type="project" value="UniProtKB-SubCell"/>
</dbReference>
<dbReference type="GO" id="GO:0045259">
    <property type="term" value="C:proton-transporting ATP synthase complex"/>
    <property type="evidence" value="ECO:0007669"/>
    <property type="project" value="UniProtKB-KW"/>
</dbReference>
<dbReference type="GO" id="GO:0005524">
    <property type="term" value="F:ATP binding"/>
    <property type="evidence" value="ECO:0007669"/>
    <property type="project" value="UniProtKB-UniRule"/>
</dbReference>
<dbReference type="GO" id="GO:0016887">
    <property type="term" value="F:ATP hydrolysis activity"/>
    <property type="evidence" value="ECO:0007669"/>
    <property type="project" value="InterPro"/>
</dbReference>
<dbReference type="GO" id="GO:0046933">
    <property type="term" value="F:proton-transporting ATP synthase activity, rotational mechanism"/>
    <property type="evidence" value="ECO:0007669"/>
    <property type="project" value="UniProtKB-UniRule"/>
</dbReference>
<dbReference type="CDD" id="cd18110">
    <property type="entry name" value="ATP-synt_F1_beta_C"/>
    <property type="match status" value="1"/>
</dbReference>
<dbReference type="CDD" id="cd18115">
    <property type="entry name" value="ATP-synt_F1_beta_N"/>
    <property type="match status" value="1"/>
</dbReference>
<dbReference type="CDD" id="cd01133">
    <property type="entry name" value="F1-ATPase_beta_CD"/>
    <property type="match status" value="1"/>
</dbReference>
<dbReference type="FunFam" id="1.10.1140.10:FF:000001">
    <property type="entry name" value="ATP synthase subunit beta"/>
    <property type="match status" value="1"/>
</dbReference>
<dbReference type="FunFam" id="3.40.50.300:FF:000026">
    <property type="entry name" value="ATP synthase subunit beta"/>
    <property type="match status" value="1"/>
</dbReference>
<dbReference type="Gene3D" id="2.40.10.170">
    <property type="match status" value="1"/>
</dbReference>
<dbReference type="Gene3D" id="1.10.1140.10">
    <property type="entry name" value="Bovine Mitochondrial F1-atpase, Atp Synthase Beta Chain, Chain D, domain 3"/>
    <property type="match status" value="1"/>
</dbReference>
<dbReference type="Gene3D" id="3.40.50.300">
    <property type="entry name" value="P-loop containing nucleotide triphosphate hydrolases"/>
    <property type="match status" value="1"/>
</dbReference>
<dbReference type="HAMAP" id="MF_01347">
    <property type="entry name" value="ATP_synth_beta_bact"/>
    <property type="match status" value="1"/>
</dbReference>
<dbReference type="InterPro" id="IPR003593">
    <property type="entry name" value="AAA+_ATPase"/>
</dbReference>
<dbReference type="InterPro" id="IPR055190">
    <property type="entry name" value="ATP-synt_VA_C"/>
</dbReference>
<dbReference type="InterPro" id="IPR005722">
    <property type="entry name" value="ATP_synth_F1_bsu"/>
</dbReference>
<dbReference type="InterPro" id="IPR020003">
    <property type="entry name" value="ATPase_a/bsu_AS"/>
</dbReference>
<dbReference type="InterPro" id="IPR050053">
    <property type="entry name" value="ATPase_alpha/beta_chains"/>
</dbReference>
<dbReference type="InterPro" id="IPR004100">
    <property type="entry name" value="ATPase_F1/V1/A1_a/bsu_N"/>
</dbReference>
<dbReference type="InterPro" id="IPR036121">
    <property type="entry name" value="ATPase_F1/V1/A1_a/bsu_N_sf"/>
</dbReference>
<dbReference type="InterPro" id="IPR000194">
    <property type="entry name" value="ATPase_F1/V1/A1_a/bsu_nucl-bd"/>
</dbReference>
<dbReference type="InterPro" id="IPR024034">
    <property type="entry name" value="ATPase_F1/V1_b/a_C"/>
</dbReference>
<dbReference type="InterPro" id="IPR027417">
    <property type="entry name" value="P-loop_NTPase"/>
</dbReference>
<dbReference type="NCBIfam" id="TIGR01039">
    <property type="entry name" value="atpD"/>
    <property type="match status" value="1"/>
</dbReference>
<dbReference type="PANTHER" id="PTHR15184">
    <property type="entry name" value="ATP SYNTHASE"/>
    <property type="match status" value="1"/>
</dbReference>
<dbReference type="PANTHER" id="PTHR15184:SF71">
    <property type="entry name" value="ATP SYNTHASE SUBUNIT BETA, MITOCHONDRIAL"/>
    <property type="match status" value="1"/>
</dbReference>
<dbReference type="Pfam" id="PF00006">
    <property type="entry name" value="ATP-synt_ab"/>
    <property type="match status" value="1"/>
</dbReference>
<dbReference type="Pfam" id="PF02874">
    <property type="entry name" value="ATP-synt_ab_N"/>
    <property type="match status" value="1"/>
</dbReference>
<dbReference type="Pfam" id="PF22919">
    <property type="entry name" value="ATP-synt_VA_C"/>
    <property type="match status" value="1"/>
</dbReference>
<dbReference type="SMART" id="SM00382">
    <property type="entry name" value="AAA"/>
    <property type="match status" value="1"/>
</dbReference>
<dbReference type="SUPFAM" id="SSF47917">
    <property type="entry name" value="C-terminal domain of alpha and beta subunits of F1 ATP synthase"/>
    <property type="match status" value="1"/>
</dbReference>
<dbReference type="SUPFAM" id="SSF50615">
    <property type="entry name" value="N-terminal domain of alpha and beta subunits of F1 ATP synthase"/>
    <property type="match status" value="1"/>
</dbReference>
<dbReference type="SUPFAM" id="SSF52540">
    <property type="entry name" value="P-loop containing nucleoside triphosphate hydrolases"/>
    <property type="match status" value="1"/>
</dbReference>
<dbReference type="PROSITE" id="PS00152">
    <property type="entry name" value="ATPASE_ALPHA_BETA"/>
    <property type="match status" value="1"/>
</dbReference>
<evidence type="ECO:0000255" key="1">
    <source>
        <dbReference type="HAMAP-Rule" id="MF_01347"/>
    </source>
</evidence>
<comment type="function">
    <text evidence="1">Produces ATP from ADP in the presence of a proton gradient across the membrane. The catalytic sites are hosted primarily by the beta subunits.</text>
</comment>
<comment type="catalytic activity">
    <reaction evidence="1">
        <text>ATP + H2O + 4 H(+)(in) = ADP + phosphate + 5 H(+)(out)</text>
        <dbReference type="Rhea" id="RHEA:57720"/>
        <dbReference type="ChEBI" id="CHEBI:15377"/>
        <dbReference type="ChEBI" id="CHEBI:15378"/>
        <dbReference type="ChEBI" id="CHEBI:30616"/>
        <dbReference type="ChEBI" id="CHEBI:43474"/>
        <dbReference type="ChEBI" id="CHEBI:456216"/>
        <dbReference type="EC" id="7.1.2.2"/>
    </reaction>
</comment>
<comment type="subunit">
    <text evidence="1">F-type ATPases have 2 components, CF(1) - the catalytic core - and CF(0) - the membrane proton channel. CF(1) has five subunits: alpha(3), beta(3), gamma(1), delta(1), epsilon(1). CF(0) has three main subunits: a(1), b(2) and c(9-12). The alpha and beta chains form an alternating ring which encloses part of the gamma chain. CF(1) is attached to CF(0) by a central stalk formed by the gamma and epsilon chains, while a peripheral stalk is formed by the delta and b chains.</text>
</comment>
<comment type="subcellular location">
    <subcellularLocation>
        <location evidence="1">Cell inner membrane</location>
        <topology evidence="1">Peripheral membrane protein</topology>
    </subcellularLocation>
</comment>
<comment type="similarity">
    <text evidence="1">Belongs to the ATPase alpha/beta chains family.</text>
</comment>
<accession>C1F3N6</accession>
<proteinExistence type="inferred from homology"/>
<name>ATPB_ACIC5</name>
<sequence>MAENIGTVIQVSGPAVDVQFPEATMPGIYQALRVVSDGFDVPTPINVILEVQQHLGEGRVRCVAMEATDGMVRGMKAIDLGGPISVPVGRETLGRVLNVIGEPVDNMGPVQAKVHMPIHRQAPAFDEQATGEEMFETGVKVIDLIQPFLKGGKIGLFGGAGVGKTVVIQELINNVASKHGGFSVFAGVGERTREGNDLWLEFQEAGVIDIHDFSKSKAALIYGQMTEPPGARLRVALTGLTVAEYFRDQEGADTLLFIDNIFRFTQAGSEVSTLLGRMPSAVGYQPNLATEMGELQERITSTKKGSVTSVQAVYVPADDMTDPAPATTFAHLDATTVLSRPLSELGIYPAVDPLASTSRILTPAVVGQEHYDVAQGVKRILQRYKDLQDIIAILGIDELSEEDRLTVSRARKVQKFLSQPFHVAEQFTGIPGRYCKIADTVRSFKEVIEGKHDSVPEQAFYMKGTIEEVLEEAEKMQAAK</sequence>
<protein>
    <recommendedName>
        <fullName evidence="1">ATP synthase subunit beta</fullName>
        <ecNumber evidence="1">7.1.2.2</ecNumber>
    </recommendedName>
    <alternativeName>
        <fullName evidence="1">ATP synthase F1 sector subunit beta</fullName>
    </alternativeName>
    <alternativeName>
        <fullName evidence="1">F-ATPase subunit beta</fullName>
    </alternativeName>
</protein>
<gene>
    <name evidence="1" type="primary">atpD</name>
    <name type="ordered locus">ACP_1028</name>
</gene>
<keyword id="KW-0066">ATP synthesis</keyword>
<keyword id="KW-0067">ATP-binding</keyword>
<keyword id="KW-0997">Cell inner membrane</keyword>
<keyword id="KW-1003">Cell membrane</keyword>
<keyword id="KW-0139">CF(1)</keyword>
<keyword id="KW-0375">Hydrogen ion transport</keyword>
<keyword id="KW-0406">Ion transport</keyword>
<keyword id="KW-0472">Membrane</keyword>
<keyword id="KW-0547">Nucleotide-binding</keyword>
<keyword id="KW-1185">Reference proteome</keyword>
<keyword id="KW-1278">Translocase</keyword>
<keyword id="KW-0813">Transport</keyword>
<reference key="1">
    <citation type="journal article" date="2009" name="Appl. Environ. Microbiol.">
        <title>Three genomes from the phylum Acidobacteria provide insight into the lifestyles of these microorganisms in soils.</title>
        <authorList>
            <person name="Ward N.L."/>
            <person name="Challacombe J.F."/>
            <person name="Janssen P.H."/>
            <person name="Henrissat B."/>
            <person name="Coutinho P.M."/>
            <person name="Wu M."/>
            <person name="Xie G."/>
            <person name="Haft D.H."/>
            <person name="Sait M."/>
            <person name="Badger J."/>
            <person name="Barabote R.D."/>
            <person name="Bradley B."/>
            <person name="Brettin T.S."/>
            <person name="Brinkac L.M."/>
            <person name="Bruce D."/>
            <person name="Creasy T."/>
            <person name="Daugherty S.C."/>
            <person name="Davidsen T.M."/>
            <person name="DeBoy R.T."/>
            <person name="Detter J.C."/>
            <person name="Dodson R.J."/>
            <person name="Durkin A.S."/>
            <person name="Ganapathy A."/>
            <person name="Gwinn-Giglio M."/>
            <person name="Han C.S."/>
            <person name="Khouri H."/>
            <person name="Kiss H."/>
            <person name="Kothari S.P."/>
            <person name="Madupu R."/>
            <person name="Nelson K.E."/>
            <person name="Nelson W.C."/>
            <person name="Paulsen I."/>
            <person name="Penn K."/>
            <person name="Ren Q."/>
            <person name="Rosovitz M.J."/>
            <person name="Selengut J.D."/>
            <person name="Shrivastava S."/>
            <person name="Sullivan S.A."/>
            <person name="Tapia R."/>
            <person name="Thompson L.S."/>
            <person name="Watkins K.L."/>
            <person name="Yang Q."/>
            <person name="Yu C."/>
            <person name="Zafar N."/>
            <person name="Zhou L."/>
            <person name="Kuske C.R."/>
        </authorList>
    </citation>
    <scope>NUCLEOTIDE SEQUENCE [LARGE SCALE GENOMIC DNA]</scope>
    <source>
        <strain>ATCC 51196 / DSM 11244 / BCRC 80197 / JCM 7670 / NBRC 15755 / NCIMB 13165 / 161</strain>
    </source>
</reference>
<feature type="chain" id="PRO_1000166565" description="ATP synthase subunit beta">
    <location>
        <begin position="1"/>
        <end position="480"/>
    </location>
</feature>
<feature type="binding site" evidence="1">
    <location>
        <begin position="158"/>
        <end position="165"/>
    </location>
    <ligand>
        <name>ATP</name>
        <dbReference type="ChEBI" id="CHEBI:30616"/>
    </ligand>
</feature>
<organism>
    <name type="scientific">Acidobacterium capsulatum (strain ATCC 51196 / DSM 11244 / BCRC 80197 / JCM 7670 / NBRC 15755 / NCIMB 13165 / 161)</name>
    <dbReference type="NCBI Taxonomy" id="240015"/>
    <lineage>
        <taxon>Bacteria</taxon>
        <taxon>Pseudomonadati</taxon>
        <taxon>Acidobacteriota</taxon>
        <taxon>Terriglobia</taxon>
        <taxon>Terriglobales</taxon>
        <taxon>Acidobacteriaceae</taxon>
        <taxon>Acidobacterium</taxon>
    </lineage>
</organism>